<organism>
    <name type="scientific">Bos taurus</name>
    <name type="common">Bovine</name>
    <dbReference type="NCBI Taxonomy" id="9913"/>
    <lineage>
        <taxon>Eukaryota</taxon>
        <taxon>Metazoa</taxon>
        <taxon>Chordata</taxon>
        <taxon>Craniata</taxon>
        <taxon>Vertebrata</taxon>
        <taxon>Euteleostomi</taxon>
        <taxon>Mammalia</taxon>
        <taxon>Eutheria</taxon>
        <taxon>Laurasiatheria</taxon>
        <taxon>Artiodactyla</taxon>
        <taxon>Ruminantia</taxon>
        <taxon>Pecora</taxon>
        <taxon>Bovidae</taxon>
        <taxon>Bovinae</taxon>
        <taxon>Bos</taxon>
    </lineage>
</organism>
<proteinExistence type="evidence at transcript level"/>
<protein>
    <recommendedName>
        <fullName>Intraflagellar transport protein 46 homolog</fullName>
    </recommendedName>
</protein>
<sequence length="301" mass="33922">MADNSSDEYEDENNKEKKKTSQLTPQRGFSENDDDDDDDDSSETDSDDDDEEHGAPLEGAYDPADYEHLPVSAEVKELFQYISRYTPQLIDLDHKLKPFIPDFIPAVGDIDAFLKVPRPDGKPDNLGLLVLDEPSTKQSDPTVLSLWLTENSKQHNITQHMKVKSLEDAEKNPKAIDTWIESISELHRSKPPATVHYTRPMPDIDTLMQEWSPEFEELLGKVSLPTAEIDCSLAEYIDMICAILDIPVYKSRIQSLHLLFSLYSEFKNSQHFKALAEGKTAFTPPSNSNSQAGDAETLTFS</sequence>
<reference key="1">
    <citation type="submission" date="2006-05" db="EMBL/GenBank/DDBJ databases">
        <authorList>
            <consortium name="NIH - Mammalian Gene Collection (MGC) project"/>
        </authorList>
    </citation>
    <scope>NUCLEOTIDE SEQUENCE [LARGE SCALE MRNA]</scope>
    <source>
        <strain>Hereford</strain>
        <tissue>Hippocampus</tissue>
    </source>
</reference>
<gene>
    <name type="primary">IFT46</name>
</gene>
<dbReference type="EMBL" id="BC116107">
    <property type="protein sequence ID" value="AAI16108.1"/>
    <property type="molecule type" value="mRNA"/>
</dbReference>
<dbReference type="RefSeq" id="NP_001068677.1">
    <property type="nucleotide sequence ID" value="NM_001075209.1"/>
</dbReference>
<dbReference type="SMR" id="Q1LZB4"/>
<dbReference type="FunCoup" id="Q1LZB4">
    <property type="interactions" value="2359"/>
</dbReference>
<dbReference type="STRING" id="9913.ENSBTAP00000017195"/>
<dbReference type="PaxDb" id="9913-ENSBTAP00000017195"/>
<dbReference type="GeneID" id="505579"/>
<dbReference type="KEGG" id="bta:505579"/>
<dbReference type="CTD" id="56912"/>
<dbReference type="VEuPathDB" id="HostDB:ENSBTAG00000012941"/>
<dbReference type="eggNOG" id="ENOG502QPNA">
    <property type="taxonomic scope" value="Eukaryota"/>
</dbReference>
<dbReference type="HOGENOM" id="CLU_039364_1_0_1"/>
<dbReference type="InParanoid" id="Q1LZB4"/>
<dbReference type="OMA" id="QYIRRYT"/>
<dbReference type="OrthoDB" id="2119217at2759"/>
<dbReference type="TreeFam" id="TF314221"/>
<dbReference type="Reactome" id="R-BTA-5620924">
    <property type="pathway name" value="Intraflagellar transport"/>
</dbReference>
<dbReference type="Proteomes" id="UP000009136">
    <property type="component" value="Chromosome 15"/>
</dbReference>
<dbReference type="Bgee" id="ENSBTAG00000012941">
    <property type="expression patterns" value="Expressed in oviduct epithelium and 107 other cell types or tissues"/>
</dbReference>
<dbReference type="GO" id="GO:0005737">
    <property type="term" value="C:cytoplasm"/>
    <property type="evidence" value="ECO:0007669"/>
    <property type="project" value="UniProtKB-KW"/>
</dbReference>
<dbReference type="GO" id="GO:0030992">
    <property type="term" value="C:intraciliary transport particle B"/>
    <property type="evidence" value="ECO:0000250"/>
    <property type="project" value="UniProtKB"/>
</dbReference>
<dbReference type="GO" id="GO:0005815">
    <property type="term" value="C:microtubule organizing center"/>
    <property type="evidence" value="ECO:0000318"/>
    <property type="project" value="GO_Central"/>
</dbReference>
<dbReference type="GO" id="GO:0031514">
    <property type="term" value="C:motile cilium"/>
    <property type="evidence" value="ECO:0000318"/>
    <property type="project" value="GO_Central"/>
</dbReference>
<dbReference type="GO" id="GO:0060271">
    <property type="term" value="P:cilium assembly"/>
    <property type="evidence" value="ECO:0000318"/>
    <property type="project" value="GO_Central"/>
</dbReference>
<dbReference type="GO" id="GO:0042073">
    <property type="term" value="P:intraciliary transport"/>
    <property type="evidence" value="ECO:0000318"/>
    <property type="project" value="GO_Central"/>
</dbReference>
<dbReference type="InterPro" id="IPR022088">
    <property type="entry name" value="Intraflagellar_transp_cmplxB"/>
</dbReference>
<dbReference type="PANTHER" id="PTHR13376">
    <property type="entry name" value="INTRAFLAGELLAR TRANSPORT PROTEIN 46 HOMOLOG"/>
    <property type="match status" value="1"/>
</dbReference>
<dbReference type="PANTHER" id="PTHR13376:SF0">
    <property type="entry name" value="INTRAFLAGELLAR TRANSPORT PROTEIN 46 HOMOLOG"/>
    <property type="match status" value="1"/>
</dbReference>
<dbReference type="Pfam" id="PF12317">
    <property type="entry name" value="IFT46_B_C"/>
    <property type="match status" value="1"/>
</dbReference>
<evidence type="ECO:0000250" key="1"/>
<evidence type="ECO:0000250" key="2">
    <source>
        <dbReference type="UniProtKB" id="Q9DB07"/>
    </source>
</evidence>
<evidence type="ECO:0000250" key="3">
    <source>
        <dbReference type="UniProtKB" id="Q9NQC8"/>
    </source>
</evidence>
<evidence type="ECO:0000256" key="4">
    <source>
        <dbReference type="SAM" id="MobiDB-lite"/>
    </source>
</evidence>
<evidence type="ECO:0000305" key="5"/>
<accession>Q1LZB4</accession>
<keyword id="KW-0966">Cell projection</keyword>
<keyword id="KW-0969">Cilium</keyword>
<keyword id="KW-0963">Cytoplasm</keyword>
<keyword id="KW-0206">Cytoskeleton</keyword>
<keyword id="KW-0597">Phosphoprotein</keyword>
<keyword id="KW-1185">Reference proteome</keyword>
<comment type="function">
    <text evidence="1">Forms part of a complex involved in intraflagellar transport (IFT), the bi-directional movement of particles required for the assembly, maintenance and functioning of primary cilia. May play a role in chondrocyte maturation and skeletogenesis (By similarity).</text>
</comment>
<comment type="subunit">
    <text evidence="2 3">Component of the IFT complex B, at least composed of IFT20, IFT22, IFT25, IFT27, IFT46, IFT52, TRAF3IP1/IFT54, IFT57, IFT74, IFT80, IFT81, and IFT88. Interacts with IFT57, IFT88 and DAW1. Interacts with ARL13B. Interacts with IFT56 (By similarity). Interacts with TTC25 (By similarity). Interacts with IFT70B (By similarity).</text>
</comment>
<comment type="subcellular location">
    <subcellularLocation>
        <location evidence="1">Cytoplasm</location>
        <location evidence="1">Cytoskeleton</location>
        <location evidence="1">Cilium basal body</location>
    </subcellularLocation>
    <subcellularLocation>
        <location evidence="1">Cell projection</location>
        <location evidence="1">Cilium</location>
    </subcellularLocation>
    <text evidence="1">Expression is concentrated at the cilium basal body but is also detected along the length of the cilium.</text>
</comment>
<comment type="similarity">
    <text evidence="5">Belongs to the IFT46 family.</text>
</comment>
<feature type="chain" id="PRO_0000249461" description="Intraflagellar transport protein 46 homolog">
    <location>
        <begin position="1"/>
        <end position="301"/>
    </location>
</feature>
<feature type="region of interest" description="Disordered" evidence="4">
    <location>
        <begin position="1"/>
        <end position="63"/>
    </location>
</feature>
<feature type="region of interest" description="Disordered" evidence="4">
    <location>
        <begin position="280"/>
        <end position="301"/>
    </location>
</feature>
<feature type="compositionally biased region" description="Acidic residues" evidence="4">
    <location>
        <begin position="1"/>
        <end position="13"/>
    </location>
</feature>
<feature type="compositionally biased region" description="Acidic residues" evidence="4">
    <location>
        <begin position="31"/>
        <end position="52"/>
    </location>
</feature>
<feature type="compositionally biased region" description="Polar residues" evidence="4">
    <location>
        <begin position="283"/>
        <end position="301"/>
    </location>
</feature>
<feature type="modified residue" description="Phosphothreonine" evidence="2">
    <location>
        <position position="283"/>
    </location>
</feature>
<name>IFT46_BOVIN</name>